<proteinExistence type="inferred from homology"/>
<sequence length="458" mass="49669">MSGRIVQIIGAVIDVEFPRDAVPKVYDALKVSDTETILEVQQQLGDGVVRAIAMGTTEGLKRGLDVVNSGSAISVPVGKATLGRIMNVLGEPIDEAGEIGEDERMPIHRKAPSYAEQAASNELLETGIKVIDLVCPFAKGGKVGLFGGAGVGKTVNMMELIRNIATEHSGYSVFAGVGERTREGNDFYHEMQESNVLDKVSLVYGQMNEPPGNRLRVALTGLTIAEKFRDDGRDVLLFVDNIYRYTLAGTEVSALLGRMPSAVGYQPTLAEEMGVLQERITSTKTGSITSVQAVYVPADDLTDPSPATTFSHLDATVVLARSIAELGIYPAIDPLDSTSRQLDPLTVGEEHYNTARGVQGVLQRYKELKDIIAILGMDELSDEDKLTVSRARKIQRFLSQPFFVAEVFTGAPGKYVSLKETIRGFQGILDGEYDDLPEQAFYMVGTIDEAVEKANNMK</sequence>
<keyword id="KW-0066">ATP synthesis</keyword>
<keyword id="KW-0067">ATP-binding</keyword>
<keyword id="KW-0997">Cell inner membrane</keyword>
<keyword id="KW-1003">Cell membrane</keyword>
<keyword id="KW-0139">CF(1)</keyword>
<keyword id="KW-0375">Hydrogen ion transport</keyword>
<keyword id="KW-0406">Ion transport</keyword>
<keyword id="KW-0472">Membrane</keyword>
<keyword id="KW-0547">Nucleotide-binding</keyword>
<keyword id="KW-1185">Reference proteome</keyword>
<keyword id="KW-1278">Translocase</keyword>
<keyword id="KW-0813">Transport</keyword>
<name>ATPB_CHRSD</name>
<gene>
    <name evidence="1" type="primary">atpD</name>
    <name type="ordered locus">Csal_3284</name>
</gene>
<organism>
    <name type="scientific">Chromohalobacter salexigens (strain ATCC BAA-138 / DSM 3043 / CIP 106854 / NCIMB 13768 / 1H11)</name>
    <dbReference type="NCBI Taxonomy" id="290398"/>
    <lineage>
        <taxon>Bacteria</taxon>
        <taxon>Pseudomonadati</taxon>
        <taxon>Pseudomonadota</taxon>
        <taxon>Gammaproteobacteria</taxon>
        <taxon>Oceanospirillales</taxon>
        <taxon>Halomonadaceae</taxon>
        <taxon>Chromohalobacter</taxon>
    </lineage>
</organism>
<reference key="1">
    <citation type="journal article" date="2011" name="Stand. Genomic Sci.">
        <title>Complete genome sequence of the halophilic and highly halotolerant Chromohalobacter salexigens type strain (1H11(T)).</title>
        <authorList>
            <person name="Copeland A."/>
            <person name="O'Connor K."/>
            <person name="Lucas S."/>
            <person name="Lapidus A."/>
            <person name="Berry K.W."/>
            <person name="Detter J.C."/>
            <person name="Del Rio T.G."/>
            <person name="Hammon N."/>
            <person name="Dalin E."/>
            <person name="Tice H."/>
            <person name="Pitluck S."/>
            <person name="Bruce D."/>
            <person name="Goodwin L."/>
            <person name="Han C."/>
            <person name="Tapia R."/>
            <person name="Saunders E."/>
            <person name="Schmutz J."/>
            <person name="Brettin T."/>
            <person name="Larimer F."/>
            <person name="Land M."/>
            <person name="Hauser L."/>
            <person name="Vargas C."/>
            <person name="Nieto J.J."/>
            <person name="Kyrpides N.C."/>
            <person name="Ivanova N."/>
            <person name="Goker M."/>
            <person name="Klenk H.P."/>
            <person name="Csonka L.N."/>
            <person name="Woyke T."/>
        </authorList>
    </citation>
    <scope>NUCLEOTIDE SEQUENCE [LARGE SCALE GENOMIC DNA]</scope>
    <source>
        <strain>ATCC BAA-138 / DSM 3043 / CIP 106854 / NCIMB 13768 / 1H11</strain>
    </source>
</reference>
<evidence type="ECO:0000255" key="1">
    <source>
        <dbReference type="HAMAP-Rule" id="MF_01347"/>
    </source>
</evidence>
<dbReference type="EC" id="7.1.2.2" evidence="1"/>
<dbReference type="EMBL" id="CP000285">
    <property type="protein sequence ID" value="ABE60628.1"/>
    <property type="molecule type" value="Genomic_DNA"/>
</dbReference>
<dbReference type="RefSeq" id="WP_011508574.1">
    <property type="nucleotide sequence ID" value="NC_007963.1"/>
</dbReference>
<dbReference type="SMR" id="Q1QSD0"/>
<dbReference type="STRING" id="290398.Csal_3284"/>
<dbReference type="GeneID" id="95335975"/>
<dbReference type="KEGG" id="csa:Csal_3284"/>
<dbReference type="eggNOG" id="COG0055">
    <property type="taxonomic scope" value="Bacteria"/>
</dbReference>
<dbReference type="HOGENOM" id="CLU_022398_0_2_6"/>
<dbReference type="OrthoDB" id="9801639at2"/>
<dbReference type="Proteomes" id="UP000000239">
    <property type="component" value="Chromosome"/>
</dbReference>
<dbReference type="GO" id="GO:0005886">
    <property type="term" value="C:plasma membrane"/>
    <property type="evidence" value="ECO:0007669"/>
    <property type="project" value="UniProtKB-SubCell"/>
</dbReference>
<dbReference type="GO" id="GO:0045259">
    <property type="term" value="C:proton-transporting ATP synthase complex"/>
    <property type="evidence" value="ECO:0007669"/>
    <property type="project" value="UniProtKB-KW"/>
</dbReference>
<dbReference type="GO" id="GO:0005524">
    <property type="term" value="F:ATP binding"/>
    <property type="evidence" value="ECO:0007669"/>
    <property type="project" value="UniProtKB-UniRule"/>
</dbReference>
<dbReference type="GO" id="GO:0016887">
    <property type="term" value="F:ATP hydrolysis activity"/>
    <property type="evidence" value="ECO:0007669"/>
    <property type="project" value="InterPro"/>
</dbReference>
<dbReference type="GO" id="GO:0046933">
    <property type="term" value="F:proton-transporting ATP synthase activity, rotational mechanism"/>
    <property type="evidence" value="ECO:0007669"/>
    <property type="project" value="UniProtKB-UniRule"/>
</dbReference>
<dbReference type="CDD" id="cd18110">
    <property type="entry name" value="ATP-synt_F1_beta_C"/>
    <property type="match status" value="1"/>
</dbReference>
<dbReference type="CDD" id="cd18115">
    <property type="entry name" value="ATP-synt_F1_beta_N"/>
    <property type="match status" value="1"/>
</dbReference>
<dbReference type="CDD" id="cd01133">
    <property type="entry name" value="F1-ATPase_beta_CD"/>
    <property type="match status" value="1"/>
</dbReference>
<dbReference type="FunFam" id="1.10.1140.10:FF:000001">
    <property type="entry name" value="ATP synthase subunit beta"/>
    <property type="match status" value="1"/>
</dbReference>
<dbReference type="FunFam" id="3.40.50.300:FF:000004">
    <property type="entry name" value="ATP synthase subunit beta"/>
    <property type="match status" value="1"/>
</dbReference>
<dbReference type="Gene3D" id="2.40.10.170">
    <property type="match status" value="1"/>
</dbReference>
<dbReference type="Gene3D" id="1.10.1140.10">
    <property type="entry name" value="Bovine Mitochondrial F1-atpase, Atp Synthase Beta Chain, Chain D, domain 3"/>
    <property type="match status" value="1"/>
</dbReference>
<dbReference type="Gene3D" id="3.40.50.300">
    <property type="entry name" value="P-loop containing nucleotide triphosphate hydrolases"/>
    <property type="match status" value="1"/>
</dbReference>
<dbReference type="HAMAP" id="MF_01347">
    <property type="entry name" value="ATP_synth_beta_bact"/>
    <property type="match status" value="1"/>
</dbReference>
<dbReference type="InterPro" id="IPR003593">
    <property type="entry name" value="AAA+_ATPase"/>
</dbReference>
<dbReference type="InterPro" id="IPR055190">
    <property type="entry name" value="ATP-synt_VA_C"/>
</dbReference>
<dbReference type="InterPro" id="IPR005722">
    <property type="entry name" value="ATP_synth_F1_bsu"/>
</dbReference>
<dbReference type="InterPro" id="IPR020003">
    <property type="entry name" value="ATPase_a/bsu_AS"/>
</dbReference>
<dbReference type="InterPro" id="IPR050053">
    <property type="entry name" value="ATPase_alpha/beta_chains"/>
</dbReference>
<dbReference type="InterPro" id="IPR004100">
    <property type="entry name" value="ATPase_F1/V1/A1_a/bsu_N"/>
</dbReference>
<dbReference type="InterPro" id="IPR036121">
    <property type="entry name" value="ATPase_F1/V1/A1_a/bsu_N_sf"/>
</dbReference>
<dbReference type="InterPro" id="IPR000194">
    <property type="entry name" value="ATPase_F1/V1/A1_a/bsu_nucl-bd"/>
</dbReference>
<dbReference type="InterPro" id="IPR024034">
    <property type="entry name" value="ATPase_F1/V1_b/a_C"/>
</dbReference>
<dbReference type="InterPro" id="IPR027417">
    <property type="entry name" value="P-loop_NTPase"/>
</dbReference>
<dbReference type="NCBIfam" id="TIGR01039">
    <property type="entry name" value="atpD"/>
    <property type="match status" value="1"/>
</dbReference>
<dbReference type="PANTHER" id="PTHR15184">
    <property type="entry name" value="ATP SYNTHASE"/>
    <property type="match status" value="1"/>
</dbReference>
<dbReference type="PANTHER" id="PTHR15184:SF71">
    <property type="entry name" value="ATP SYNTHASE SUBUNIT BETA, MITOCHONDRIAL"/>
    <property type="match status" value="1"/>
</dbReference>
<dbReference type="Pfam" id="PF00006">
    <property type="entry name" value="ATP-synt_ab"/>
    <property type="match status" value="1"/>
</dbReference>
<dbReference type="Pfam" id="PF02874">
    <property type="entry name" value="ATP-synt_ab_N"/>
    <property type="match status" value="1"/>
</dbReference>
<dbReference type="Pfam" id="PF22919">
    <property type="entry name" value="ATP-synt_VA_C"/>
    <property type="match status" value="1"/>
</dbReference>
<dbReference type="SMART" id="SM00382">
    <property type="entry name" value="AAA"/>
    <property type="match status" value="1"/>
</dbReference>
<dbReference type="SUPFAM" id="SSF47917">
    <property type="entry name" value="C-terminal domain of alpha and beta subunits of F1 ATP synthase"/>
    <property type="match status" value="1"/>
</dbReference>
<dbReference type="SUPFAM" id="SSF50615">
    <property type="entry name" value="N-terminal domain of alpha and beta subunits of F1 ATP synthase"/>
    <property type="match status" value="1"/>
</dbReference>
<dbReference type="SUPFAM" id="SSF52540">
    <property type="entry name" value="P-loop containing nucleoside triphosphate hydrolases"/>
    <property type="match status" value="1"/>
</dbReference>
<dbReference type="PROSITE" id="PS00152">
    <property type="entry name" value="ATPASE_ALPHA_BETA"/>
    <property type="match status" value="1"/>
</dbReference>
<feature type="chain" id="PRO_0000254242" description="ATP synthase subunit beta">
    <location>
        <begin position="1"/>
        <end position="458"/>
    </location>
</feature>
<feature type="binding site" evidence="1">
    <location>
        <begin position="147"/>
        <end position="154"/>
    </location>
    <ligand>
        <name>ATP</name>
        <dbReference type="ChEBI" id="CHEBI:30616"/>
    </ligand>
</feature>
<protein>
    <recommendedName>
        <fullName evidence="1">ATP synthase subunit beta</fullName>
        <ecNumber evidence="1">7.1.2.2</ecNumber>
    </recommendedName>
    <alternativeName>
        <fullName evidence="1">ATP synthase F1 sector subunit beta</fullName>
    </alternativeName>
    <alternativeName>
        <fullName evidence="1">F-ATPase subunit beta</fullName>
    </alternativeName>
</protein>
<comment type="function">
    <text evidence="1">Produces ATP from ADP in the presence of a proton gradient across the membrane. The catalytic sites are hosted primarily by the beta subunits.</text>
</comment>
<comment type="catalytic activity">
    <reaction evidence="1">
        <text>ATP + H2O + 4 H(+)(in) = ADP + phosphate + 5 H(+)(out)</text>
        <dbReference type="Rhea" id="RHEA:57720"/>
        <dbReference type="ChEBI" id="CHEBI:15377"/>
        <dbReference type="ChEBI" id="CHEBI:15378"/>
        <dbReference type="ChEBI" id="CHEBI:30616"/>
        <dbReference type="ChEBI" id="CHEBI:43474"/>
        <dbReference type="ChEBI" id="CHEBI:456216"/>
        <dbReference type="EC" id="7.1.2.2"/>
    </reaction>
</comment>
<comment type="subunit">
    <text evidence="1">F-type ATPases have 2 components, CF(1) - the catalytic core - and CF(0) - the membrane proton channel. CF(1) has five subunits: alpha(3), beta(3), gamma(1), delta(1), epsilon(1). CF(0) has three main subunits: a(1), b(2) and c(9-12). The alpha and beta chains form an alternating ring which encloses part of the gamma chain. CF(1) is attached to CF(0) by a central stalk formed by the gamma and epsilon chains, while a peripheral stalk is formed by the delta and b chains.</text>
</comment>
<comment type="subcellular location">
    <subcellularLocation>
        <location evidence="1">Cell inner membrane</location>
        <topology evidence="1">Peripheral membrane protein</topology>
    </subcellularLocation>
</comment>
<comment type="similarity">
    <text evidence="1">Belongs to the ATPase alpha/beta chains family.</text>
</comment>
<accession>Q1QSD0</accession>